<accession>Q7SIF9</accession>
<evidence type="ECO:0000250" key="1">
    <source>
        <dbReference type="UniProtKB" id="Q01922"/>
    </source>
</evidence>
<evidence type="ECO:0000255" key="2"/>
<evidence type="ECO:0000269" key="3">
    <source>
    </source>
</evidence>
<evidence type="ECO:0000305" key="4"/>
<evidence type="ECO:0000312" key="5">
    <source>
        <dbReference type="PDB" id="1EYX"/>
    </source>
</evidence>
<evidence type="ECO:0007829" key="6">
    <source>
        <dbReference type="PDB" id="1EYX"/>
    </source>
</evidence>
<comment type="function">
    <text evidence="3">Light-harvesting photosynthetic tetrapyrrole chromophore-protein from the phycobiliprotein complex.</text>
</comment>
<comment type="subunit">
    <text evidence="1 3">Heterododecamer of 6 alpha and 6 beta chains. The basic functional unit of phycobiliproteins is a ring-shaped hexamer formed from two back-to-back trimers contacting via the alpha chain subunits. The trimers are composed of alpha/beta subunit heterodimers arranged around a three-fold axis of symmetry. The phycoerythrins also contain a gamma subunit which is located in the center of the hexamer.</text>
</comment>
<comment type="subcellular location">
    <subcellularLocation>
        <location>Plastid</location>
        <location>Chloroplast thylakoid membrane</location>
        <topology>Peripheral membrane protein</topology>
        <orientation>Stromal side</orientation>
    </subcellularLocation>
    <text>Forms the periphery of the phycobilisome rod.</text>
</comment>
<comment type="PTM">
    <text>Contains two covalently linked phycoerythrobilin chromophores and one covalently linked phycourobilin chromophore.</text>
</comment>
<comment type="miscellaneous">
    <text evidence="3">The light-harvesting antenna system in red algae and cyanobacteria is formed of phycobilisomes. These are composed of the phycobiliproteins phycoerythrin (CPE), phycocyanin (CPC) and allophycocyanin (APC). Cyanobacteria also contain phycoerythrocyanin (PCC). The phycobiliproteins all share the same subunit composition and organization with variations in the covalently bound open-chain tetrapyrrole chromophores. The phycobiliprotein complexes are arranged sequentially in antenna complexes linked by linker proteins with CPE at the periphery, CPC in the middle and APC at the core feeding to the photosynthetic reaction center.</text>
</comment>
<comment type="similarity">
    <text evidence="2">Belongs to the phycobiliprotein family.</text>
</comment>
<geneLocation type="chloroplast"/>
<gene>
    <name type="primary">rpeB</name>
</gene>
<name>PHEB_AGACH</name>
<protein>
    <recommendedName>
        <fullName>R-phycoerythrin beta chain</fullName>
    </recommendedName>
</protein>
<organism>
    <name type="scientific">Agarophyton chilense</name>
    <name type="common">Red seaweed</name>
    <name type="synonym">Gracilaria chilensis</name>
    <dbReference type="NCBI Taxonomy" id="2510777"/>
    <lineage>
        <taxon>Eukaryota</taxon>
        <taxon>Rhodophyta</taxon>
        <taxon>Florideophyceae</taxon>
        <taxon>Rhodymeniophycidae</taxon>
        <taxon>Gracilariales</taxon>
        <taxon>Gracilariaceae</taxon>
        <taxon>Agarophyton</taxon>
    </lineage>
</organism>
<keyword id="KW-0002">3D-structure</keyword>
<keyword id="KW-0042">Antenna complex</keyword>
<keyword id="KW-0089">Bile pigment</keyword>
<keyword id="KW-0150">Chloroplast</keyword>
<keyword id="KW-0157">Chromophore</keyword>
<keyword id="KW-0249">Electron transport</keyword>
<keyword id="KW-0472">Membrane</keyword>
<keyword id="KW-0488">Methylation</keyword>
<keyword id="KW-0602">Photosynthesis</keyword>
<keyword id="KW-0605">Phycobilisome</keyword>
<keyword id="KW-0934">Plastid</keyword>
<keyword id="KW-0793">Thylakoid</keyword>
<keyword id="KW-0813">Transport</keyword>
<feature type="chain" id="PRO_0000239448" description="R-phycoerythrin beta chain">
    <location>
        <begin position="1"/>
        <end position="177"/>
    </location>
</feature>
<feature type="binding site" evidence="3">
    <location>
        <position position="35"/>
    </location>
    <ligand>
        <name>(2R,3E)-phycoerythrobilin</name>
        <dbReference type="ChEBI" id="CHEBI:85276"/>
        <label>2</label>
    </ligand>
</feature>
<feature type="binding site" evidence="3">
    <location>
        <position position="39"/>
    </location>
    <ligand>
        <name>(2R,3E)-phycoerythrobilin</name>
        <dbReference type="ChEBI" id="CHEBI:85276"/>
        <label>2</label>
    </ligand>
</feature>
<feature type="binding site" description="covalent" evidence="3">
    <location>
        <position position="50"/>
    </location>
    <ligand>
        <name>phycourobilin</name>
        <dbReference type="ChEBI" id="CHEBI:189062"/>
    </ligand>
</feature>
<feature type="binding site" evidence="3">
    <location>
        <position position="54"/>
    </location>
    <ligand>
        <name>phycourobilin</name>
        <dbReference type="ChEBI" id="CHEBI:189062"/>
    </ligand>
</feature>
<feature type="binding site" description="covalent" evidence="3">
    <location>
        <position position="61"/>
    </location>
    <ligand>
        <name>phycourobilin</name>
        <dbReference type="ChEBI" id="CHEBI:189062"/>
    </ligand>
</feature>
<feature type="binding site" evidence="3">
    <location>
        <position position="72"/>
    </location>
    <ligand>
        <name>(2R,3E)-phycoerythrobilin</name>
        <dbReference type="ChEBI" id="CHEBI:85276"/>
        <label>1</label>
    </ligand>
</feature>
<feature type="binding site" evidence="3">
    <location>
        <begin position="77"/>
        <end position="78"/>
    </location>
    <ligand>
        <name>(2R,3E)-phycoerythrobilin</name>
        <dbReference type="ChEBI" id="CHEBI:85276"/>
        <label>1</label>
    </ligand>
</feature>
<feature type="binding site" description="covalent" evidence="3">
    <location>
        <position position="82"/>
    </location>
    <ligand>
        <name>(2R,3E)-phycoerythrobilin</name>
        <dbReference type="ChEBI" id="CHEBI:85276"/>
        <label>1</label>
    </ligand>
</feature>
<feature type="binding site" evidence="3">
    <location>
        <begin position="84"/>
        <end position="85"/>
    </location>
    <ligand>
        <name>(2R,3E)-phycoerythrobilin</name>
        <dbReference type="ChEBI" id="CHEBI:85276"/>
        <label>1</label>
    </ligand>
</feature>
<feature type="binding site" evidence="3">
    <location>
        <begin position="147"/>
        <end position="148"/>
    </location>
    <ligand>
        <name>phycourobilin</name>
        <dbReference type="ChEBI" id="CHEBI:189062"/>
    </ligand>
</feature>
<feature type="binding site" evidence="3">
    <location>
        <position position="154"/>
    </location>
    <ligand>
        <name>(2R,3E)-phycoerythrobilin</name>
        <dbReference type="ChEBI" id="CHEBI:85276"/>
        <label>2</label>
    </ligand>
</feature>
<feature type="binding site" description="covalent" evidence="3">
    <location>
        <position position="158"/>
    </location>
    <ligand>
        <name>(2R,3E)-phycoerythrobilin</name>
        <dbReference type="ChEBI" id="CHEBI:85276"/>
        <label>2</label>
    </ligand>
</feature>
<feature type="modified residue" description="N4-methylasparagine" evidence="3">
    <location>
        <position position="72"/>
    </location>
</feature>
<feature type="helix" evidence="6">
    <location>
        <begin position="6"/>
        <end position="13"/>
    </location>
</feature>
<feature type="turn" evidence="6">
    <location>
        <begin position="14"/>
        <end position="16"/>
    </location>
</feature>
<feature type="helix" evidence="6">
    <location>
        <begin position="21"/>
        <end position="32"/>
    </location>
</feature>
<feature type="helix" evidence="6">
    <location>
        <begin position="34"/>
        <end position="45"/>
    </location>
</feature>
<feature type="helix" evidence="6">
    <location>
        <begin position="48"/>
        <end position="61"/>
    </location>
</feature>
<feature type="helix" evidence="6">
    <location>
        <begin position="64"/>
        <end position="67"/>
    </location>
</feature>
<feature type="helix" evidence="6">
    <location>
        <begin position="76"/>
        <end position="99"/>
    </location>
</feature>
<feature type="helix" evidence="6">
    <location>
        <begin position="103"/>
        <end position="108"/>
    </location>
</feature>
<feature type="helix" evidence="6">
    <location>
        <begin position="113"/>
        <end position="120"/>
    </location>
</feature>
<feature type="helix" evidence="6">
    <location>
        <begin position="124"/>
        <end position="142"/>
    </location>
</feature>
<feature type="helix" evidence="6">
    <location>
        <begin position="159"/>
        <end position="175"/>
    </location>
</feature>
<dbReference type="PDB" id="1EYX">
    <property type="method" value="X-ray"/>
    <property type="resolution" value="2.25 A"/>
    <property type="chains" value="B/L=1-177"/>
</dbReference>
<dbReference type="PDBsum" id="1EYX"/>
<dbReference type="SMR" id="Q7SIF9"/>
<dbReference type="iPTMnet" id="Q7SIF9"/>
<dbReference type="EvolutionaryTrace" id="Q7SIF9"/>
<dbReference type="GO" id="GO:0009535">
    <property type="term" value="C:chloroplast thylakoid membrane"/>
    <property type="evidence" value="ECO:0007669"/>
    <property type="project" value="UniProtKB-SubCell"/>
</dbReference>
<dbReference type="GO" id="GO:0030089">
    <property type="term" value="C:phycobilisome"/>
    <property type="evidence" value="ECO:0007669"/>
    <property type="project" value="UniProtKB-KW"/>
</dbReference>
<dbReference type="GO" id="GO:0015979">
    <property type="term" value="P:photosynthesis"/>
    <property type="evidence" value="ECO:0007669"/>
    <property type="project" value="UniProtKB-KW"/>
</dbReference>
<dbReference type="CDD" id="cd14767">
    <property type="entry name" value="PE_beta-like"/>
    <property type="match status" value="1"/>
</dbReference>
<dbReference type="Gene3D" id="1.10.490.20">
    <property type="entry name" value="Phycocyanins"/>
    <property type="match status" value="1"/>
</dbReference>
<dbReference type="InterPro" id="IPR009050">
    <property type="entry name" value="Globin-like_sf"/>
</dbReference>
<dbReference type="InterPro" id="IPR012128">
    <property type="entry name" value="Phycobilisome_asu/bsu"/>
</dbReference>
<dbReference type="InterPro" id="IPR038719">
    <property type="entry name" value="Phycobilisome_asu/bsu_sf"/>
</dbReference>
<dbReference type="PANTHER" id="PTHR34011:SF7">
    <property type="entry name" value="C-PHYCOCYANIN BETA SUBUNIT"/>
    <property type="match status" value="1"/>
</dbReference>
<dbReference type="PANTHER" id="PTHR34011">
    <property type="entry name" value="PHYCOBILISOME 32.1 KDA LINKER POLYPEPTIDE, PHYCOCYANIN-ASSOCIATED, ROD 2-RELATED"/>
    <property type="match status" value="1"/>
</dbReference>
<dbReference type="Pfam" id="PF00502">
    <property type="entry name" value="Phycobilisome"/>
    <property type="match status" value="1"/>
</dbReference>
<dbReference type="PIRSF" id="PIRSF000081">
    <property type="entry name" value="Phycocyanin"/>
    <property type="match status" value="1"/>
</dbReference>
<dbReference type="SUPFAM" id="SSF46458">
    <property type="entry name" value="Globin-like"/>
    <property type="match status" value="1"/>
</dbReference>
<proteinExistence type="evidence at protein level"/>
<sequence>MLDAFSRVISNADAKAAYVGGSDLQALRTFISDGNKRLDAVNYIVSNSSCIVSDAISGMICENPGLITPGGNCYTNRRMAACLRDGEIILRYISYALLAGDSSVLEDRCLNGLKETYIALGVPTNSTVRAVSIMKAAVGAFISNTASQRKGEVIEGDCSALAAEIASYCDRISAAVS</sequence>
<reference evidence="4 5" key="1">
    <citation type="journal article" date="2001" name="Acta Crystallogr. D">
        <title>Crystallization and 2.2 A resolution structure of R-phycoerythrin from Gracilaria chilensis: a case of perfect hemihedral twinning.</title>
        <authorList>
            <person name="Contreras-Martel C."/>
            <person name="Martinez-Oyanedel J."/>
            <person name="Bunster M."/>
            <person name="Legrand P."/>
            <person name="Piras C."/>
            <person name="Vernede X."/>
            <person name="Fontecilla-Camps J.-C."/>
        </authorList>
    </citation>
    <scope>X-RAY CRYSTALLOGRAPHY (2.25 ANGSTROMS) IN COMPLEX WITH PHYCOERYTHROBILIN; PHYCOUROBILIN AND PHEA</scope>
    <scope>FUNCTION</scope>
    <scope>SUBUNIT</scope>
    <scope>METHYLATION AT ASN-72</scope>
</reference>